<sequence>MKSGVIPSSAVGQKINEWYRYIRTFSVPDAEVLKAEIQQELKHMQHDSNLLLYYSLMEFRHQLMLDYLEPLEKLNIEDQPSLSELSRNIDSNQADLKGLLDYYVNFFRGMYEFDKREFISAITYYKQAEKKLSFVADHIERAEFYFKIAEAYYYMKQTYFSLINIKNAYEIYVEQETYNVRIIQCHFVFGVNLMDERNFEQAARHFKLALNMAQAEQKAQLVGRAYYNLGLCYYNQDLLDPAIDYFEKAVSTFESSRIVNSLPQAYFLITLIYYKQGKHDKASEYHKRGYEYAKETDDADYAVKFEFLQSLYLDQPNEEGIERCFQYLKNKNMYADIEDLALEVAKYYYEQKWFKLSASYFLQVEEARKQIQRSEGLYEIEI</sequence>
<reference key="1">
    <citation type="journal article" date="1996" name="Microbiology">
        <title>The 25 degrees-36 degrees region of the Bacillus subtilis chromosome: determination of the sequence of a 146 kb segment and identification of 113 genes.</title>
        <authorList>
            <person name="Yamane K."/>
            <person name="Kumano M."/>
            <person name="Kurita K."/>
        </authorList>
    </citation>
    <scope>NUCLEOTIDE SEQUENCE [GENOMIC DNA]</scope>
    <source>
        <strain>168</strain>
    </source>
</reference>
<reference key="2">
    <citation type="journal article" date="1997" name="Nature">
        <title>The complete genome sequence of the Gram-positive bacterium Bacillus subtilis.</title>
        <authorList>
            <person name="Kunst F."/>
            <person name="Ogasawara N."/>
            <person name="Moszer I."/>
            <person name="Albertini A.M."/>
            <person name="Alloni G."/>
            <person name="Azevedo V."/>
            <person name="Bertero M.G."/>
            <person name="Bessieres P."/>
            <person name="Bolotin A."/>
            <person name="Borchert S."/>
            <person name="Borriss R."/>
            <person name="Boursier L."/>
            <person name="Brans A."/>
            <person name="Braun M."/>
            <person name="Brignell S.C."/>
            <person name="Bron S."/>
            <person name="Brouillet S."/>
            <person name="Bruschi C.V."/>
            <person name="Caldwell B."/>
            <person name="Capuano V."/>
            <person name="Carter N.M."/>
            <person name="Choi S.-K."/>
            <person name="Codani J.-J."/>
            <person name="Connerton I.F."/>
            <person name="Cummings N.J."/>
            <person name="Daniel R.A."/>
            <person name="Denizot F."/>
            <person name="Devine K.M."/>
            <person name="Duesterhoeft A."/>
            <person name="Ehrlich S.D."/>
            <person name="Emmerson P.T."/>
            <person name="Entian K.-D."/>
            <person name="Errington J."/>
            <person name="Fabret C."/>
            <person name="Ferrari E."/>
            <person name="Foulger D."/>
            <person name="Fritz C."/>
            <person name="Fujita M."/>
            <person name="Fujita Y."/>
            <person name="Fuma S."/>
            <person name="Galizzi A."/>
            <person name="Galleron N."/>
            <person name="Ghim S.-Y."/>
            <person name="Glaser P."/>
            <person name="Goffeau A."/>
            <person name="Golightly E.J."/>
            <person name="Grandi G."/>
            <person name="Guiseppi G."/>
            <person name="Guy B.J."/>
            <person name="Haga K."/>
            <person name="Haiech J."/>
            <person name="Harwood C.R."/>
            <person name="Henaut A."/>
            <person name="Hilbert H."/>
            <person name="Holsappel S."/>
            <person name="Hosono S."/>
            <person name="Hullo M.-F."/>
            <person name="Itaya M."/>
            <person name="Jones L.-M."/>
            <person name="Joris B."/>
            <person name="Karamata D."/>
            <person name="Kasahara Y."/>
            <person name="Klaerr-Blanchard M."/>
            <person name="Klein C."/>
            <person name="Kobayashi Y."/>
            <person name="Koetter P."/>
            <person name="Koningstein G."/>
            <person name="Krogh S."/>
            <person name="Kumano M."/>
            <person name="Kurita K."/>
            <person name="Lapidus A."/>
            <person name="Lardinois S."/>
            <person name="Lauber J."/>
            <person name="Lazarevic V."/>
            <person name="Lee S.-M."/>
            <person name="Levine A."/>
            <person name="Liu H."/>
            <person name="Masuda S."/>
            <person name="Mauel C."/>
            <person name="Medigue C."/>
            <person name="Medina N."/>
            <person name="Mellado R.P."/>
            <person name="Mizuno M."/>
            <person name="Moestl D."/>
            <person name="Nakai S."/>
            <person name="Noback M."/>
            <person name="Noone D."/>
            <person name="O'Reilly M."/>
            <person name="Ogawa K."/>
            <person name="Ogiwara A."/>
            <person name="Oudega B."/>
            <person name="Park S.-H."/>
            <person name="Parro V."/>
            <person name="Pohl T.M."/>
            <person name="Portetelle D."/>
            <person name="Porwollik S."/>
            <person name="Prescott A.M."/>
            <person name="Presecan E."/>
            <person name="Pujic P."/>
            <person name="Purnelle B."/>
            <person name="Rapoport G."/>
            <person name="Rey M."/>
            <person name="Reynolds S."/>
            <person name="Rieger M."/>
            <person name="Rivolta C."/>
            <person name="Rocha E."/>
            <person name="Roche B."/>
            <person name="Rose M."/>
            <person name="Sadaie Y."/>
            <person name="Sato T."/>
            <person name="Scanlan E."/>
            <person name="Schleich S."/>
            <person name="Schroeter R."/>
            <person name="Scoffone F."/>
            <person name="Sekiguchi J."/>
            <person name="Sekowska A."/>
            <person name="Seror S.J."/>
            <person name="Serror P."/>
            <person name="Shin B.-S."/>
            <person name="Soldo B."/>
            <person name="Sorokin A."/>
            <person name="Tacconi E."/>
            <person name="Takagi T."/>
            <person name="Takahashi H."/>
            <person name="Takemaru K."/>
            <person name="Takeuchi M."/>
            <person name="Tamakoshi A."/>
            <person name="Tanaka T."/>
            <person name="Terpstra P."/>
            <person name="Tognoni A."/>
            <person name="Tosato V."/>
            <person name="Uchiyama S."/>
            <person name="Vandenbol M."/>
            <person name="Vannier F."/>
            <person name="Vassarotti A."/>
            <person name="Viari A."/>
            <person name="Wambutt R."/>
            <person name="Wedler E."/>
            <person name="Wedler H."/>
            <person name="Weitzenegger T."/>
            <person name="Winters P."/>
            <person name="Wipat A."/>
            <person name="Yamamoto H."/>
            <person name="Yamane K."/>
            <person name="Yasumoto K."/>
            <person name="Yata K."/>
            <person name="Yoshida K."/>
            <person name="Yoshikawa H.-F."/>
            <person name="Zumstein E."/>
            <person name="Yoshikawa H."/>
            <person name="Danchin A."/>
        </authorList>
    </citation>
    <scope>NUCLEOTIDE SEQUENCE [LARGE SCALE GENOMIC DNA]</scope>
    <source>
        <strain>168</strain>
    </source>
</reference>
<reference key="3">
    <citation type="journal article" date="1996" name="Genes Dev.">
        <title>Purification and characterization of an extracellular peptide factor that affects two different developmental pathways in Bacillus subtilis.</title>
        <authorList>
            <person name="Solomon J.M."/>
            <person name="Lazazzera B.A."/>
            <person name="Grossman A.D."/>
        </authorList>
    </citation>
    <scope>ACTIVITY REGULATION</scope>
    <source>
        <strain>168 / JH642</strain>
    </source>
</reference>
<reference key="4">
    <citation type="journal article" date="1999" name="J. Bacteriol.">
        <title>An autoregulatory circuit affecting peptide signaling in Bacillus subtilis.</title>
        <authorList>
            <person name="Lazazzera B.A."/>
            <person name="Kurtser I.G."/>
            <person name="McQuade R.S."/>
            <person name="Grossman A.D."/>
        </authorList>
    </citation>
    <scope>TRANSCRIPTIONAL REGULATION</scope>
    <source>
        <strain>168 / JH642</strain>
    </source>
</reference>
<reference key="5">
    <citation type="journal article" date="2003" name="Mol. Microbiol.">
        <title>TPR-mediated interaction of RapC with ComA inhibits response regulator-DNA binding for competence development in Bacillus subtilis.</title>
        <authorList>
            <person name="Core L."/>
            <person name="Perego M."/>
        </authorList>
    </citation>
    <scope>FUNCTION</scope>
    <scope>ACTIVITY REGULATION</scope>
    <scope>SUBUNIT</scope>
    <scope>INTERACTION WITH COMA AND CSF</scope>
    <scope>DISRUPTION PHENOTYPE</scope>
    <scope>MUTAGENESIS OF ASP-195 AND PRO-263</scope>
    <source>
        <strain>168 / JH642</strain>
    </source>
</reference>
<reference key="6">
    <citation type="journal article" date="2005" name="J. Bacteriol.">
        <title>Synergistic regulation of competence development in Bacillus subtilis by two Rap-Phr systems.</title>
        <authorList>
            <person name="Bongiorni C."/>
            <person name="Ishikawa S."/>
            <person name="Stephenson S."/>
            <person name="Ogasawara N."/>
            <person name="Perego M."/>
        </authorList>
    </citation>
    <scope>INTERACTION WITH COMA</scope>
    <source>
        <strain>168 / JH642</strain>
    </source>
</reference>
<reference key="7">
    <citation type="journal article" date="2006" name="J. Bacteriol.">
        <title>Modulation of the ComA-dependent quorum response in Bacillus subtilis by multiple Rap proteins and Phr peptides.</title>
        <authorList>
            <person name="Auchtung J.M."/>
            <person name="Lee C.A."/>
            <person name="Grossman A.D."/>
        </authorList>
    </citation>
    <scope>FUNCTION</scope>
    <source>
        <strain>168 / JH642</strain>
    </source>
</reference>
<keyword id="KW-0178">Competence</keyword>
<keyword id="KW-0963">Cytoplasm</keyword>
<keyword id="KW-1185">Reference proteome</keyword>
<keyword id="KW-0677">Repeat</keyword>
<keyword id="KW-0802">TPR repeat</keyword>
<comment type="function">
    <text evidence="3 5">Involved in the regulation of genetic competence development (PubMed:12950917, PubMed:16816200). Inhibits the activity of ComA, a transcriptional factor that regulates the development of genetic competence (PubMed:12950917, PubMed:16816200). Acts by binding to ComA, independently of its phosphorylation state, leading to the inhibition of ComA DNA-binding activity (PubMed:12950917). Does not dephosphorylate phospho-ComA and does not affect the phosphorylation level of the ComP-ComA system (PubMed:12950917).</text>
</comment>
<comment type="activity regulation">
    <text evidence="3 6">Inhibited by the competence and sporulation stimulating factor (CSF), encoded by phrC, which prevents RapC-ComA interaction.</text>
</comment>
<comment type="subunit">
    <text evidence="3 4">Homodimer (PubMed:12950917). Interacts specifically with the C-terminal DNA-binding domain of ComA (PubMed:12950917, PubMed:15968044). Interacts with CSF (PubMed:12950917).</text>
</comment>
<comment type="subcellular location">
    <subcellularLocation>
        <location evidence="7">Cytoplasm</location>
    </subcellularLocation>
</comment>
<comment type="induction">
    <text evidence="2">Part of the rapC-phrC operon, which is controlled by the P1 promoter (PubMed:10464187). Transcription from the P1 promoter is activated by high cell density through the phosphorylated form of ComA (PubMed:10464187). RapC is part of an autoregulatory loop, and it negatively regulates its own expression (PubMed:10464187).</text>
</comment>
<comment type="disruption phenotype">
    <text evidence="3">Deletion of the gene increases the expression of the ComA-dependent genes rapA and rapC itself.</text>
</comment>
<comment type="similarity">
    <text evidence="7">Belongs to the Rap family.</text>
</comment>
<gene>
    <name type="primary">rapC</name>
    <name type="synonym">yclL</name>
    <name type="ordered locus">BSU03770</name>
</gene>
<evidence type="ECO:0000255" key="1"/>
<evidence type="ECO:0000269" key="2">
    <source>
    </source>
</evidence>
<evidence type="ECO:0000269" key="3">
    <source>
    </source>
</evidence>
<evidence type="ECO:0000269" key="4">
    <source>
    </source>
</evidence>
<evidence type="ECO:0000269" key="5">
    <source>
    </source>
</evidence>
<evidence type="ECO:0000269" key="6">
    <source>
    </source>
</evidence>
<evidence type="ECO:0000305" key="7"/>
<organism>
    <name type="scientific">Bacillus subtilis (strain 168)</name>
    <dbReference type="NCBI Taxonomy" id="224308"/>
    <lineage>
        <taxon>Bacteria</taxon>
        <taxon>Bacillati</taxon>
        <taxon>Bacillota</taxon>
        <taxon>Bacilli</taxon>
        <taxon>Bacillales</taxon>
        <taxon>Bacillaceae</taxon>
        <taxon>Bacillus</taxon>
    </lineage>
</organism>
<protein>
    <recommendedName>
        <fullName evidence="7">Regulatory protein RapC</fullName>
    </recommendedName>
    <alternativeName>
        <fullName evidence="7">Rap protein C</fullName>
    </alternativeName>
</protein>
<feature type="chain" id="PRO_0000106437" description="Regulatory protein RapC">
    <location>
        <begin position="1"/>
        <end position="382"/>
    </location>
</feature>
<feature type="repeat" description="TPR 1" evidence="1">
    <location>
        <begin position="102"/>
        <end position="138"/>
    </location>
</feature>
<feature type="repeat" description="TPR 2" evidence="1">
    <location>
        <begin position="149"/>
        <end position="182"/>
    </location>
</feature>
<feature type="repeat" description="TPR 3" evidence="1">
    <location>
        <begin position="183"/>
        <end position="216"/>
    </location>
</feature>
<feature type="repeat" description="TPR 4" evidence="1">
    <location>
        <begin position="223"/>
        <end position="256"/>
    </location>
</feature>
<feature type="repeat" description="TPR 5" evidence="1">
    <location>
        <begin position="263"/>
        <end position="296"/>
    </location>
</feature>
<feature type="mutagenesis site" description="Prevents inhibition by CSF." evidence="3">
    <original>D</original>
    <variation>N</variation>
    <location>
        <position position="195"/>
    </location>
</feature>
<feature type="mutagenesis site" description="Prevents inhibition by CSF." evidence="3">
    <original>P</original>
    <variation>L</variation>
    <location>
        <position position="263"/>
    </location>
</feature>
<dbReference type="EMBL" id="D50453">
    <property type="protein sequence ID" value="BAA09009.1"/>
    <property type="molecule type" value="Genomic_DNA"/>
</dbReference>
<dbReference type="EMBL" id="AL009126">
    <property type="protein sequence ID" value="CAB12185.1"/>
    <property type="molecule type" value="Genomic_DNA"/>
</dbReference>
<dbReference type="PIR" id="F69688">
    <property type="entry name" value="F69688"/>
</dbReference>
<dbReference type="RefSeq" id="NP_388259.1">
    <property type="nucleotide sequence ID" value="NC_000964.3"/>
</dbReference>
<dbReference type="RefSeq" id="WP_003246686.1">
    <property type="nucleotide sequence ID" value="NZ_OZ025638.1"/>
</dbReference>
<dbReference type="SMR" id="P94415"/>
<dbReference type="FunCoup" id="P94415">
    <property type="interactions" value="66"/>
</dbReference>
<dbReference type="STRING" id="224308.BSU03770"/>
<dbReference type="PaxDb" id="224308-BSU03770"/>
<dbReference type="EnsemblBacteria" id="CAB12185">
    <property type="protein sequence ID" value="CAB12185"/>
    <property type="gene ID" value="BSU_03770"/>
</dbReference>
<dbReference type="GeneID" id="938284"/>
<dbReference type="KEGG" id="bsu:BSU03770"/>
<dbReference type="PATRIC" id="fig|224308.179.peg.397"/>
<dbReference type="eggNOG" id="COG0457">
    <property type="taxonomic scope" value="Bacteria"/>
</dbReference>
<dbReference type="InParanoid" id="P94415"/>
<dbReference type="OrthoDB" id="2957368at2"/>
<dbReference type="PhylomeDB" id="P94415"/>
<dbReference type="BioCyc" id="BSUB:BSU03770-MONOMER"/>
<dbReference type="Proteomes" id="UP000001570">
    <property type="component" value="Chromosome"/>
</dbReference>
<dbReference type="GO" id="GO:0005737">
    <property type="term" value="C:cytoplasm"/>
    <property type="evidence" value="ECO:0007669"/>
    <property type="project" value="UniProtKB-SubCell"/>
</dbReference>
<dbReference type="GO" id="GO:0030420">
    <property type="term" value="P:establishment of competence for transformation"/>
    <property type="evidence" value="ECO:0007669"/>
    <property type="project" value="UniProtKB-KW"/>
</dbReference>
<dbReference type="Gene3D" id="1.25.40.10">
    <property type="entry name" value="Tetratricopeptide repeat domain"/>
    <property type="match status" value="1"/>
</dbReference>
<dbReference type="InterPro" id="IPR051476">
    <property type="entry name" value="Bac_ResReg_Asp_Phosphatase"/>
</dbReference>
<dbReference type="InterPro" id="IPR011990">
    <property type="entry name" value="TPR-like_helical_dom_sf"/>
</dbReference>
<dbReference type="InterPro" id="IPR019734">
    <property type="entry name" value="TPR_rpt"/>
</dbReference>
<dbReference type="PANTHER" id="PTHR46630">
    <property type="entry name" value="TETRATRICOPEPTIDE REPEAT PROTEIN 29"/>
    <property type="match status" value="1"/>
</dbReference>
<dbReference type="PANTHER" id="PTHR46630:SF1">
    <property type="entry name" value="TETRATRICOPEPTIDE REPEAT PROTEIN 29"/>
    <property type="match status" value="1"/>
</dbReference>
<dbReference type="Pfam" id="PF18801">
    <property type="entry name" value="RapH_N"/>
    <property type="match status" value="1"/>
</dbReference>
<dbReference type="Pfam" id="PF13424">
    <property type="entry name" value="TPR_12"/>
    <property type="match status" value="1"/>
</dbReference>
<dbReference type="SMART" id="SM00028">
    <property type="entry name" value="TPR"/>
    <property type="match status" value="5"/>
</dbReference>
<dbReference type="SUPFAM" id="SSF48452">
    <property type="entry name" value="TPR-like"/>
    <property type="match status" value="2"/>
</dbReference>
<dbReference type="PROSITE" id="PS50005">
    <property type="entry name" value="TPR"/>
    <property type="match status" value="3"/>
</dbReference>
<dbReference type="PROSITE" id="PS50293">
    <property type="entry name" value="TPR_REGION"/>
    <property type="match status" value="1"/>
</dbReference>
<accession>P94415</accession>
<proteinExistence type="evidence at protein level"/>
<name>RAPC_BACSU</name>